<name>TYSY_PORGI</name>
<sequence length="264" mass="30835">MKQYLDLLRRILDEGVRKEDRTGTGTISVFGHQMCFDLEEGFPLLTTKRLHLKSIIYELLWFLRGDTNVHYLQEHGVRIWNEWADENGDLGPIYGYQWRSWPDYRGGHIDQMQEVLRQLREEPDSRRIIVCSWNVGQLADMHLPPCHCFMQFYVADGRLSLQLYQRSADSFLGIPFNIASYALLLQMIAHVTGLKPGRFVHTLGDAHIYLNHLEQVQLQLSREPRALPRMVLNPEVSDLFDFRYEDFRLEGYDPHPHIAGVVAV</sequence>
<comment type="function">
    <text evidence="1">Catalyzes the reductive methylation of 2'-deoxyuridine-5'-monophosphate (dUMP) to 2'-deoxythymidine-5'-monophosphate (dTMP) while utilizing 5,10-methylenetetrahydrofolate (mTHF) as the methyl donor and reductant in the reaction, yielding dihydrofolate (DHF) as a by-product. This enzymatic reaction provides an intracellular de novo source of dTMP, an essential precursor for DNA biosynthesis.</text>
</comment>
<comment type="catalytic activity">
    <reaction evidence="1">
        <text>dUMP + (6R)-5,10-methylene-5,6,7,8-tetrahydrofolate = 7,8-dihydrofolate + dTMP</text>
        <dbReference type="Rhea" id="RHEA:12104"/>
        <dbReference type="ChEBI" id="CHEBI:15636"/>
        <dbReference type="ChEBI" id="CHEBI:57451"/>
        <dbReference type="ChEBI" id="CHEBI:63528"/>
        <dbReference type="ChEBI" id="CHEBI:246422"/>
        <dbReference type="EC" id="2.1.1.45"/>
    </reaction>
</comment>
<comment type="pathway">
    <text evidence="1">Pyrimidine metabolism; dTTP biosynthesis.</text>
</comment>
<comment type="subunit">
    <text evidence="1">Homodimer.</text>
</comment>
<comment type="subcellular location">
    <subcellularLocation>
        <location evidence="1">Cytoplasm</location>
    </subcellularLocation>
</comment>
<comment type="similarity">
    <text evidence="1">Belongs to the thymidylate synthase family. Bacterial-type ThyA subfamily.</text>
</comment>
<comment type="sequence caution" evidence="2">
    <conflict type="erroneous initiation">
        <sequence resource="EMBL-CDS" id="AAQ67021"/>
    </conflict>
</comment>
<gene>
    <name evidence="1" type="primary">thyA</name>
    <name type="ordered locus">PG_2060</name>
</gene>
<protein>
    <recommendedName>
        <fullName evidence="1">Thymidylate synthase</fullName>
        <shortName evidence="1">TS</shortName>
        <shortName evidence="1">TSase</shortName>
        <ecNumber evidence="1">2.1.1.45</ecNumber>
    </recommendedName>
</protein>
<feature type="chain" id="PRO_0000141002" description="Thymidylate synthase">
    <location>
        <begin position="1"/>
        <end position="264"/>
    </location>
</feature>
<feature type="active site" description="Nucleophile" evidence="1">
    <location>
        <position position="146"/>
    </location>
</feature>
<feature type="binding site" description="in other chain" evidence="1">
    <location>
        <position position="21"/>
    </location>
    <ligand>
        <name>dUMP</name>
        <dbReference type="ChEBI" id="CHEBI:246422"/>
        <note>ligand shared between dimeric partners</note>
    </ligand>
</feature>
<feature type="binding site" evidence="1">
    <location>
        <position position="51"/>
    </location>
    <ligand>
        <name>(6R)-5,10-methylene-5,6,7,8-tetrahydrofolate</name>
        <dbReference type="ChEBI" id="CHEBI:15636"/>
    </ligand>
</feature>
<feature type="binding site" evidence="1">
    <location>
        <begin position="126"/>
        <end position="127"/>
    </location>
    <ligand>
        <name>dUMP</name>
        <dbReference type="ChEBI" id="CHEBI:246422"/>
        <note>ligand shared between dimeric partners</note>
    </ligand>
</feature>
<feature type="binding site" description="in other chain" evidence="1">
    <location>
        <begin position="166"/>
        <end position="169"/>
    </location>
    <ligand>
        <name>dUMP</name>
        <dbReference type="ChEBI" id="CHEBI:246422"/>
        <note>ligand shared between dimeric partners</note>
    </ligand>
</feature>
<feature type="binding site" evidence="1">
    <location>
        <position position="169"/>
    </location>
    <ligand>
        <name>(6R)-5,10-methylene-5,6,7,8-tetrahydrofolate</name>
        <dbReference type="ChEBI" id="CHEBI:15636"/>
    </ligand>
</feature>
<feature type="binding site" description="in other chain" evidence="1">
    <location>
        <position position="177"/>
    </location>
    <ligand>
        <name>dUMP</name>
        <dbReference type="ChEBI" id="CHEBI:246422"/>
        <note>ligand shared between dimeric partners</note>
    </ligand>
</feature>
<feature type="binding site" description="in other chain" evidence="1">
    <location>
        <begin position="207"/>
        <end position="209"/>
    </location>
    <ligand>
        <name>dUMP</name>
        <dbReference type="ChEBI" id="CHEBI:246422"/>
        <note>ligand shared between dimeric partners</note>
    </ligand>
</feature>
<feature type="binding site" evidence="1">
    <location>
        <position position="263"/>
    </location>
    <ligand>
        <name>(6R)-5,10-methylene-5,6,7,8-tetrahydrofolate</name>
        <dbReference type="ChEBI" id="CHEBI:15636"/>
    </ligand>
</feature>
<proteinExistence type="inferred from homology"/>
<accession>Q7MTB5</accession>
<reference key="1">
    <citation type="journal article" date="2003" name="J. Bacteriol.">
        <title>Complete genome sequence of the oral pathogenic bacterium Porphyromonas gingivalis strain W83.</title>
        <authorList>
            <person name="Nelson K.E."/>
            <person name="Fleischmann R.D."/>
            <person name="DeBoy R.T."/>
            <person name="Paulsen I.T."/>
            <person name="Fouts D.E."/>
            <person name="Eisen J.A."/>
            <person name="Daugherty S.C."/>
            <person name="Dodson R.J."/>
            <person name="Durkin A.S."/>
            <person name="Gwinn M.L."/>
            <person name="Haft D.H."/>
            <person name="Kolonay J.F."/>
            <person name="Nelson W.C."/>
            <person name="Mason T.M."/>
            <person name="Tallon L."/>
            <person name="Gray J."/>
            <person name="Granger D."/>
            <person name="Tettelin H."/>
            <person name="Dong H."/>
            <person name="Galvin J.L."/>
            <person name="Duncan M.J."/>
            <person name="Dewhirst F.E."/>
            <person name="Fraser C.M."/>
        </authorList>
    </citation>
    <scope>NUCLEOTIDE SEQUENCE [LARGE SCALE GENOMIC DNA]</scope>
    <source>
        <strain>ATCC BAA-308 / W83</strain>
    </source>
</reference>
<evidence type="ECO:0000255" key="1">
    <source>
        <dbReference type="HAMAP-Rule" id="MF_00008"/>
    </source>
</evidence>
<evidence type="ECO:0000305" key="2"/>
<keyword id="KW-0963">Cytoplasm</keyword>
<keyword id="KW-0489">Methyltransferase</keyword>
<keyword id="KW-0545">Nucleotide biosynthesis</keyword>
<keyword id="KW-1185">Reference proteome</keyword>
<keyword id="KW-0808">Transferase</keyword>
<dbReference type="EC" id="2.1.1.45" evidence="1"/>
<dbReference type="EMBL" id="AE015924">
    <property type="protein sequence ID" value="AAQ67021.1"/>
    <property type="status" value="ALT_INIT"/>
    <property type="molecule type" value="Genomic_DNA"/>
</dbReference>
<dbReference type="RefSeq" id="WP_004585599.1">
    <property type="nucleotide sequence ID" value="NC_002950.2"/>
</dbReference>
<dbReference type="SMR" id="Q7MTB5"/>
<dbReference type="STRING" id="242619.PG_2060"/>
<dbReference type="EnsemblBacteria" id="AAQ67021">
    <property type="protein sequence ID" value="AAQ67021"/>
    <property type="gene ID" value="PG_2060"/>
</dbReference>
<dbReference type="GeneID" id="29257200"/>
<dbReference type="KEGG" id="pgi:PG_2060"/>
<dbReference type="eggNOG" id="COG0207">
    <property type="taxonomic scope" value="Bacteria"/>
</dbReference>
<dbReference type="HOGENOM" id="CLU_021669_0_0_10"/>
<dbReference type="UniPathway" id="UPA00575"/>
<dbReference type="Proteomes" id="UP000000588">
    <property type="component" value="Chromosome"/>
</dbReference>
<dbReference type="GO" id="GO:0005829">
    <property type="term" value="C:cytosol"/>
    <property type="evidence" value="ECO:0007669"/>
    <property type="project" value="TreeGrafter"/>
</dbReference>
<dbReference type="GO" id="GO:0004799">
    <property type="term" value="F:thymidylate synthase activity"/>
    <property type="evidence" value="ECO:0007669"/>
    <property type="project" value="UniProtKB-UniRule"/>
</dbReference>
<dbReference type="GO" id="GO:0006231">
    <property type="term" value="P:dTMP biosynthetic process"/>
    <property type="evidence" value="ECO:0007669"/>
    <property type="project" value="UniProtKB-UniRule"/>
</dbReference>
<dbReference type="GO" id="GO:0006235">
    <property type="term" value="P:dTTP biosynthetic process"/>
    <property type="evidence" value="ECO:0007669"/>
    <property type="project" value="UniProtKB-UniRule"/>
</dbReference>
<dbReference type="GO" id="GO:0032259">
    <property type="term" value="P:methylation"/>
    <property type="evidence" value="ECO:0007669"/>
    <property type="project" value="UniProtKB-KW"/>
</dbReference>
<dbReference type="CDD" id="cd00351">
    <property type="entry name" value="TS_Pyrimidine_HMase"/>
    <property type="match status" value="1"/>
</dbReference>
<dbReference type="FunFam" id="3.30.572.10:FF:000013">
    <property type="entry name" value="Thymidylate synthase"/>
    <property type="match status" value="1"/>
</dbReference>
<dbReference type="Gene3D" id="3.30.572.10">
    <property type="entry name" value="Thymidylate synthase/dCMP hydroxymethylase domain"/>
    <property type="match status" value="1"/>
</dbReference>
<dbReference type="HAMAP" id="MF_00008">
    <property type="entry name" value="Thymidy_synth_bact"/>
    <property type="match status" value="1"/>
</dbReference>
<dbReference type="InterPro" id="IPR045097">
    <property type="entry name" value="Thymidate_synth/dCMP_Mease"/>
</dbReference>
<dbReference type="InterPro" id="IPR023451">
    <property type="entry name" value="Thymidate_synth/dCMP_Mease_dom"/>
</dbReference>
<dbReference type="InterPro" id="IPR036926">
    <property type="entry name" value="Thymidate_synth/dCMP_Mease_sf"/>
</dbReference>
<dbReference type="InterPro" id="IPR000398">
    <property type="entry name" value="Thymidylate_synthase"/>
</dbReference>
<dbReference type="InterPro" id="IPR020940">
    <property type="entry name" value="Thymidylate_synthase_AS"/>
</dbReference>
<dbReference type="NCBIfam" id="NF002497">
    <property type="entry name" value="PRK01827.1-3"/>
    <property type="match status" value="1"/>
</dbReference>
<dbReference type="NCBIfam" id="NF002499">
    <property type="entry name" value="PRK01827.1-5"/>
    <property type="match status" value="1"/>
</dbReference>
<dbReference type="NCBIfam" id="TIGR03284">
    <property type="entry name" value="thym_sym"/>
    <property type="match status" value="2"/>
</dbReference>
<dbReference type="PANTHER" id="PTHR11548:SF9">
    <property type="entry name" value="THYMIDYLATE SYNTHASE"/>
    <property type="match status" value="1"/>
</dbReference>
<dbReference type="PANTHER" id="PTHR11548">
    <property type="entry name" value="THYMIDYLATE SYNTHASE 1"/>
    <property type="match status" value="1"/>
</dbReference>
<dbReference type="Pfam" id="PF00303">
    <property type="entry name" value="Thymidylat_synt"/>
    <property type="match status" value="1"/>
</dbReference>
<dbReference type="PRINTS" id="PR00108">
    <property type="entry name" value="THYMDSNTHASE"/>
</dbReference>
<dbReference type="SUPFAM" id="SSF55831">
    <property type="entry name" value="Thymidylate synthase/dCMP hydroxymethylase"/>
    <property type="match status" value="1"/>
</dbReference>
<dbReference type="PROSITE" id="PS00091">
    <property type="entry name" value="THYMIDYLATE_SYNTHASE"/>
    <property type="match status" value="1"/>
</dbReference>
<organism>
    <name type="scientific">Porphyromonas gingivalis (strain ATCC BAA-308 / W83)</name>
    <dbReference type="NCBI Taxonomy" id="242619"/>
    <lineage>
        <taxon>Bacteria</taxon>
        <taxon>Pseudomonadati</taxon>
        <taxon>Bacteroidota</taxon>
        <taxon>Bacteroidia</taxon>
        <taxon>Bacteroidales</taxon>
        <taxon>Porphyromonadaceae</taxon>
        <taxon>Porphyromonas</taxon>
    </lineage>
</organism>